<protein>
    <recommendedName>
        <fullName evidence="1">Putative glutathione-dependent formaldehyde-activating enzyme</fullName>
        <ecNumber evidence="1">4.4.1.22</ecNumber>
    </recommendedName>
    <alternativeName>
        <fullName evidence="1">S-(hydroxymethyl)glutathione synthase</fullName>
    </alternativeName>
</protein>
<proteinExistence type="inferred from homology"/>
<sequence length="186" mass="20004">MSLPLHPSLNNGITKGSANFSGGKLRCKCSSSPVEVTLAGNVAHNHACGCSKCWKPEGAIFSVIGVIPKEQVSVTANADKLYIVDESAAIQRHACSGCGVHLYGRIEKEHPFKGLDFVHTELSSEKGWQEPQFAAFVSSIIEQGFDPSKMDAVRAQFKSIGLETYDALNPPLMDAIASWTAQKAKI</sequence>
<reference key="1">
    <citation type="journal article" date="2009" name="PLoS Genet.">
        <title>The genome of Nectria haematococca: contribution of supernumerary chromosomes to gene expansion.</title>
        <authorList>
            <person name="Coleman J.J."/>
            <person name="Rounsley S.D."/>
            <person name="Rodriguez-Carres M."/>
            <person name="Kuo A."/>
            <person name="Wasmann C.C."/>
            <person name="Grimwood J."/>
            <person name="Schmutz J."/>
            <person name="Taga M."/>
            <person name="White G.J."/>
            <person name="Zhou S."/>
            <person name="Schwartz D.C."/>
            <person name="Freitag M."/>
            <person name="Ma L.-J."/>
            <person name="Danchin E.G.J."/>
            <person name="Henrissat B."/>
            <person name="Coutinho P.M."/>
            <person name="Nelson D.R."/>
            <person name="Straney D."/>
            <person name="Napoli C.A."/>
            <person name="Barker B.M."/>
            <person name="Gribskov M."/>
            <person name="Rep M."/>
            <person name="Kroken S."/>
            <person name="Molnar I."/>
            <person name="Rensing C."/>
            <person name="Kennell J.C."/>
            <person name="Zamora J."/>
            <person name="Farman M.L."/>
            <person name="Selker E.U."/>
            <person name="Salamov A."/>
            <person name="Shapiro H."/>
            <person name="Pangilinan J."/>
            <person name="Lindquist E."/>
            <person name="Lamers C."/>
            <person name="Grigoriev I.V."/>
            <person name="Geiser D.M."/>
            <person name="Covert S.F."/>
            <person name="Temporini E."/>
            <person name="VanEtten H.D."/>
        </authorList>
    </citation>
    <scope>NUCLEOTIDE SEQUENCE [LARGE SCALE GENOMIC DNA]</scope>
    <source>
        <strain>ATCC MYA-4622 / CBS 123669 / FGSC 9596 / NRRL 45880 / 77-13-4</strain>
    </source>
</reference>
<comment type="function">
    <text evidence="1">Catalyzes the condensation of formaldehyde and glutathione to S-hydroxymethylglutathione.</text>
</comment>
<comment type="catalytic activity">
    <reaction evidence="1">
        <text>S-(hydroxymethyl)glutathione = glutathione + formaldehyde</text>
        <dbReference type="Rhea" id="RHEA:22488"/>
        <dbReference type="ChEBI" id="CHEBI:16842"/>
        <dbReference type="ChEBI" id="CHEBI:57925"/>
        <dbReference type="ChEBI" id="CHEBI:58758"/>
        <dbReference type="EC" id="4.4.1.22"/>
    </reaction>
</comment>
<comment type="cofactor">
    <cofactor evidence="1 2">
        <name>Zn(2+)</name>
        <dbReference type="ChEBI" id="CHEBI:29105"/>
    </cofactor>
    <text evidence="1 2">Binds 2 Zn(2+) ions per subunit.</text>
</comment>
<comment type="pathway">
    <text evidence="1">One-carbon metabolism; formaldehyde degradation; formate from formaldehyde (glutathione route): step 1/3.</text>
</comment>
<comment type="similarity">
    <text evidence="3">Belongs to the Gfa family.</text>
</comment>
<comment type="sequence caution" evidence="3">
    <conflict type="erroneous initiation">
        <sequence resource="EMBL-CDS" id="EEU42507"/>
    </conflict>
    <text>Extended N-terminus.</text>
</comment>
<dbReference type="EC" id="4.4.1.22" evidence="1"/>
<dbReference type="EMBL" id="GG698905">
    <property type="protein sequence ID" value="EEU42507.1"/>
    <property type="status" value="ALT_INIT"/>
    <property type="molecule type" value="Genomic_DNA"/>
</dbReference>
<dbReference type="RefSeq" id="XP_003048220.1">
    <property type="nucleotide sequence ID" value="XM_003048174.1"/>
</dbReference>
<dbReference type="SMR" id="C7Z147"/>
<dbReference type="STRING" id="660122.C7Z147"/>
<dbReference type="GeneID" id="9671824"/>
<dbReference type="KEGG" id="nhe:NECHADRAFT_69107"/>
<dbReference type="VEuPathDB" id="FungiDB:NECHADRAFT_69107"/>
<dbReference type="eggNOG" id="ENOG502SKH9">
    <property type="taxonomic scope" value="Eukaryota"/>
</dbReference>
<dbReference type="InParanoid" id="C7Z147"/>
<dbReference type="OrthoDB" id="3446116at2759"/>
<dbReference type="UniPathway" id="UPA00562">
    <property type="reaction ID" value="UER00621"/>
</dbReference>
<dbReference type="Proteomes" id="UP000005206">
    <property type="component" value="Unassembled WGS sequence"/>
</dbReference>
<dbReference type="GO" id="GO:0051907">
    <property type="term" value="F:S-(hydroxymethyl)glutathione synthase activity"/>
    <property type="evidence" value="ECO:0007669"/>
    <property type="project" value="UniProtKB-UniRule"/>
</dbReference>
<dbReference type="GO" id="GO:0008270">
    <property type="term" value="F:zinc ion binding"/>
    <property type="evidence" value="ECO:0007669"/>
    <property type="project" value="UniProtKB-UniRule"/>
</dbReference>
<dbReference type="GO" id="GO:0046294">
    <property type="term" value="P:formaldehyde catabolic process"/>
    <property type="evidence" value="ECO:0007669"/>
    <property type="project" value="UniProtKB-UniRule"/>
</dbReference>
<dbReference type="Gene3D" id="3.90.1590.10">
    <property type="entry name" value="glutathione-dependent formaldehyde- activating enzyme (gfa)"/>
    <property type="match status" value="1"/>
</dbReference>
<dbReference type="HAMAP" id="MF_00723">
    <property type="entry name" value="Formald_GSH"/>
    <property type="match status" value="1"/>
</dbReference>
<dbReference type="InterPro" id="IPR006913">
    <property type="entry name" value="CENP-V/GFA"/>
</dbReference>
<dbReference type="InterPro" id="IPR014185">
    <property type="entry name" value="Formald_GSH"/>
</dbReference>
<dbReference type="InterPro" id="IPR011057">
    <property type="entry name" value="Mss4-like_sf"/>
</dbReference>
<dbReference type="NCBIfam" id="TIGR02820">
    <property type="entry name" value="formald_GSH"/>
    <property type="match status" value="1"/>
</dbReference>
<dbReference type="NCBIfam" id="NF003829">
    <property type="entry name" value="PRK05417.1"/>
    <property type="match status" value="1"/>
</dbReference>
<dbReference type="PANTHER" id="PTHR33337:SF40">
    <property type="entry name" value="CENP-V_GFA DOMAIN-CONTAINING PROTEIN-RELATED"/>
    <property type="match status" value="1"/>
</dbReference>
<dbReference type="PANTHER" id="PTHR33337">
    <property type="entry name" value="GFA DOMAIN-CONTAINING PROTEIN"/>
    <property type="match status" value="1"/>
</dbReference>
<dbReference type="Pfam" id="PF04828">
    <property type="entry name" value="GFA"/>
    <property type="match status" value="1"/>
</dbReference>
<dbReference type="PIRSF" id="PIRSF033318">
    <property type="entry name" value="Formald_GSH"/>
    <property type="match status" value="1"/>
</dbReference>
<dbReference type="SUPFAM" id="SSF51316">
    <property type="entry name" value="Mss4-like"/>
    <property type="match status" value="1"/>
</dbReference>
<dbReference type="PROSITE" id="PS51891">
    <property type="entry name" value="CENP_V_GFA"/>
    <property type="match status" value="1"/>
</dbReference>
<accession>C7Z147</accession>
<feature type="chain" id="PRO_0000406159" description="Putative glutathione-dependent formaldehyde-activating enzyme">
    <location>
        <begin position="1"/>
        <end position="186"/>
    </location>
</feature>
<feature type="domain" description="CENP-V/GFA" evidence="2">
    <location>
        <begin position="20"/>
        <end position="166"/>
    </location>
</feature>
<feature type="binding site" evidence="1 2">
    <location>
        <position position="27"/>
    </location>
    <ligand>
        <name>Zn(2+)</name>
        <dbReference type="ChEBI" id="CHEBI:29105"/>
        <label>1</label>
        <note>structural</note>
    </ligand>
</feature>
<feature type="binding site" evidence="1 2">
    <location>
        <position position="29"/>
    </location>
    <ligand>
        <name>Zn(2+)</name>
        <dbReference type="ChEBI" id="CHEBI:29105"/>
        <label>1</label>
        <note>structural</note>
    </ligand>
</feature>
<feature type="binding site" evidence="1 2">
    <location>
        <position position="48"/>
    </location>
    <ligand>
        <name>Zn(2+)</name>
        <dbReference type="ChEBI" id="CHEBI:29105"/>
        <label>2</label>
        <note>catalytic</note>
    </ligand>
</feature>
<feature type="binding site" evidence="1 2">
    <location>
        <position position="50"/>
    </location>
    <ligand>
        <name>Zn(2+)</name>
        <dbReference type="ChEBI" id="CHEBI:29105"/>
        <label>2</label>
        <note>catalytic</note>
    </ligand>
</feature>
<feature type="binding site" evidence="1 2">
    <location>
        <position position="53"/>
    </location>
    <ligand>
        <name>Zn(2+)</name>
        <dbReference type="ChEBI" id="CHEBI:29105"/>
        <label>2</label>
        <note>catalytic</note>
    </ligand>
</feature>
<feature type="binding site" evidence="1 2">
    <location>
        <position position="95"/>
    </location>
    <ligand>
        <name>Zn(2+)</name>
        <dbReference type="ChEBI" id="CHEBI:29105"/>
        <label>1</label>
        <note>structural</note>
    </ligand>
</feature>
<feature type="binding site" evidence="1 2">
    <location>
        <position position="98"/>
    </location>
    <ligand>
        <name>Zn(2+)</name>
        <dbReference type="ChEBI" id="CHEBI:29105"/>
        <label>1</label>
        <note>structural</note>
    </ligand>
</feature>
<organism>
    <name type="scientific">Fusarium vanettenii (strain ATCC MYA-4622 / CBS 123669 / FGSC 9596 / NRRL 45880 / 77-13-4)</name>
    <name type="common">Fusarium solani subsp. pisi</name>
    <dbReference type="NCBI Taxonomy" id="660122"/>
    <lineage>
        <taxon>Eukaryota</taxon>
        <taxon>Fungi</taxon>
        <taxon>Dikarya</taxon>
        <taxon>Ascomycota</taxon>
        <taxon>Pezizomycotina</taxon>
        <taxon>Sordariomycetes</taxon>
        <taxon>Hypocreomycetidae</taxon>
        <taxon>Hypocreales</taxon>
        <taxon>Nectriaceae</taxon>
        <taxon>Fusarium</taxon>
        <taxon>Fusarium solani species complex</taxon>
        <taxon>Fusarium vanettenii</taxon>
    </lineage>
</organism>
<name>GFA_FUSV7</name>
<gene>
    <name type="ORF">NECHADRAFT_69107</name>
</gene>
<keyword id="KW-0456">Lyase</keyword>
<keyword id="KW-0479">Metal-binding</keyword>
<keyword id="KW-1185">Reference proteome</keyword>
<keyword id="KW-0862">Zinc</keyword>
<evidence type="ECO:0000255" key="1">
    <source>
        <dbReference type="HAMAP-Rule" id="MF_03142"/>
    </source>
</evidence>
<evidence type="ECO:0000255" key="2">
    <source>
        <dbReference type="PROSITE-ProRule" id="PRU01239"/>
    </source>
</evidence>
<evidence type="ECO:0000305" key="3"/>